<comment type="function">
    <text evidence="2">Probable thiol protease.</text>
</comment>
<comment type="developmental stage">
    <text evidence="13">Germination specific.</text>
</comment>
<comment type="induction">
    <text evidence="10">By gibberellin.</text>
</comment>
<comment type="similarity">
    <text evidence="7 8 9">Belongs to the peptidase C1 family.</text>
</comment>
<feature type="signal peptide" evidence="5">
    <location>
        <begin position="1"/>
        <end position="22"/>
    </location>
</feature>
<feature type="propeptide" id="PRO_0000026404" description="Activation peptide" evidence="1">
    <location>
        <begin position="23"/>
        <end position="144"/>
    </location>
</feature>
<feature type="chain" id="PRO_0000026405" description="Germination-specific cysteine protease 1">
    <location>
        <begin position="145"/>
        <end position="376"/>
    </location>
</feature>
<feature type="active site" evidence="7">
    <location>
        <position position="169"/>
    </location>
</feature>
<feature type="active site" evidence="8">
    <location>
        <position position="305"/>
    </location>
</feature>
<feature type="active site" evidence="9">
    <location>
        <position position="325"/>
    </location>
</feature>
<feature type="glycosylation site" description="N-linked (GlcNAc...) asparagine" evidence="6">
    <location>
        <position position="93"/>
    </location>
</feature>
<feature type="disulfide bond" evidence="4">
    <location>
        <begin position="166"/>
        <end position="208"/>
    </location>
</feature>
<feature type="disulfide bond" evidence="4">
    <location>
        <begin position="200"/>
        <end position="241"/>
    </location>
</feature>
<feature type="disulfide bond" evidence="4">
    <location>
        <begin position="299"/>
        <end position="351"/>
    </location>
</feature>
<feature type="sequence conflict" description="In Ref. 1; AAK92229, 4; AEE86713 and 5; BAF00916." evidence="12" ref="1 4 5">
    <original>D</original>
    <variation>N</variation>
    <location>
        <position position="90"/>
    </location>
</feature>
<feature type="sequence conflict" description="In Ref. 5; BAF00916." evidence="12" ref="5">
    <original>S</original>
    <variation>R</variation>
    <location>
        <position position="277"/>
    </location>
</feature>
<name>RDL1_ARATH</name>
<evidence type="ECO:0000250" key="1">
    <source>
        <dbReference type="UniProtKB" id="P00785"/>
    </source>
</evidence>
<evidence type="ECO:0000250" key="2">
    <source>
        <dbReference type="UniProtKB" id="P43297"/>
    </source>
</evidence>
<evidence type="ECO:0000250" key="3">
    <source>
        <dbReference type="UniProtKB" id="P80884"/>
    </source>
</evidence>
<evidence type="ECO:0000250" key="4">
    <source>
        <dbReference type="UniProtKB" id="P84346"/>
    </source>
</evidence>
<evidence type="ECO:0000255" key="5"/>
<evidence type="ECO:0000255" key="6">
    <source>
        <dbReference type="PROSITE-ProRule" id="PRU00498"/>
    </source>
</evidence>
<evidence type="ECO:0000255" key="7">
    <source>
        <dbReference type="PROSITE-ProRule" id="PRU10088"/>
    </source>
</evidence>
<evidence type="ECO:0000255" key="8">
    <source>
        <dbReference type="PROSITE-ProRule" id="PRU10089"/>
    </source>
</evidence>
<evidence type="ECO:0000255" key="9">
    <source>
        <dbReference type="PROSITE-ProRule" id="PRU10090"/>
    </source>
</evidence>
<evidence type="ECO:0000269" key="10">
    <source>
    </source>
</evidence>
<evidence type="ECO:0000303" key="11">
    <source ref="1"/>
</evidence>
<evidence type="ECO:0000305" key="12"/>
<evidence type="ECO:0000305" key="13">
    <source ref="1"/>
</evidence>
<evidence type="ECO:0000312" key="14">
    <source>
        <dbReference type="Araport" id="AT4G36880"/>
    </source>
</evidence>
<evidence type="ECO:0000312" key="15">
    <source>
        <dbReference type="EMBL" id="CAB80354.1"/>
    </source>
</evidence>
<sequence>MAPSTKVLSLLLLYVVVSLASGDESIINDHLQLPSDGKWRTDEEVRSIYLQWSAEHGKTNNNNNGIINDQDKRFNIFKDNLRFIDLHNEDNKNATYKLGLTKFTDLTNDEYRKLYLGARTEPARRIAKAKNVNQKYSAAVNGKEVPETVDWRQKGAVNPIKDQGTCGSCWAFSTTAAVEGINKIVTGELISLSEQELVDCDKSYNQGCNGGLMDYAFQFIMKNGGLNTEKDYPYRGFGGKCNSFLKNSRVVSIDGYEDVPTKDETALKKAISYQPVSVAIEAGGRIFQHYQSGIFTGSCGTNLDHAVVAVGYGSENGVDYWIVRNSWGPRWGEEGYIRMERNLAASKSGKCGIAVEASYPVKYSPNPVRGNTISSV</sequence>
<keyword id="KW-1015">Disulfide bond</keyword>
<keyword id="KW-0309">Germination</keyword>
<keyword id="KW-0325">Glycoprotein</keyword>
<keyword id="KW-0378">Hydrolase</keyword>
<keyword id="KW-0645">Protease</keyword>
<keyword id="KW-1185">Reference proteome</keyword>
<keyword id="KW-0732">Signal</keyword>
<keyword id="KW-0788">Thiol protease</keyword>
<keyword id="KW-0865">Zymogen</keyword>
<proteinExistence type="evidence at transcript level"/>
<dbReference type="EC" id="3.4.22.-" evidence="3"/>
<dbReference type="EMBL" id="AY043294">
    <property type="protein sequence ID" value="AAK92229.1"/>
    <property type="molecule type" value="mRNA"/>
</dbReference>
<dbReference type="EMBL" id="Z99707">
    <property type="protein sequence ID" value="CAB16767.1"/>
    <property type="molecule type" value="Genomic_DNA"/>
</dbReference>
<dbReference type="EMBL" id="AL161590">
    <property type="protein sequence ID" value="CAB80354.1"/>
    <property type="molecule type" value="Genomic_DNA"/>
</dbReference>
<dbReference type="EMBL" id="CP002687">
    <property type="protein sequence ID" value="AEE86713.1"/>
    <property type="molecule type" value="Genomic_DNA"/>
</dbReference>
<dbReference type="EMBL" id="AK229031">
    <property type="protein sequence ID" value="BAF00916.1"/>
    <property type="molecule type" value="mRNA"/>
</dbReference>
<dbReference type="PIR" id="E85435">
    <property type="entry name" value="E85435"/>
</dbReference>
<dbReference type="SMR" id="Q94B08"/>
<dbReference type="FunCoup" id="Q94B08">
    <property type="interactions" value="252"/>
</dbReference>
<dbReference type="STRING" id="3702.Q94B08"/>
<dbReference type="MEROPS" id="C01.021"/>
<dbReference type="GlyCosmos" id="Q94B08">
    <property type="glycosylation" value="1 site, No reported glycans"/>
</dbReference>
<dbReference type="GlyGen" id="Q94B08">
    <property type="glycosylation" value="1 site"/>
</dbReference>
<dbReference type="PaxDb" id="3702-AT4G36880.1"/>
<dbReference type="PeptideAtlas" id="Q94B08"/>
<dbReference type="ProteomicsDB" id="236432"/>
<dbReference type="GeneID" id="829841"/>
<dbReference type="KEGG" id="ath:AT4G36880"/>
<dbReference type="Araport" id="AT4G36880"/>
<dbReference type="TAIR" id="AT4G36880">
    <property type="gene designation" value="CP1"/>
</dbReference>
<dbReference type="eggNOG" id="KOG1543">
    <property type="taxonomic scope" value="Eukaryota"/>
</dbReference>
<dbReference type="HOGENOM" id="CLU_012184_1_0_1"/>
<dbReference type="InParanoid" id="Q94B08"/>
<dbReference type="PhylomeDB" id="Q94B08"/>
<dbReference type="PRO" id="PR:Q94B08"/>
<dbReference type="Proteomes" id="UP000006548">
    <property type="component" value="Chromosome 4"/>
</dbReference>
<dbReference type="ExpressionAtlas" id="Q94B08">
    <property type="expression patterns" value="baseline and differential"/>
</dbReference>
<dbReference type="GO" id="GO:0005615">
    <property type="term" value="C:extracellular space"/>
    <property type="evidence" value="ECO:0000318"/>
    <property type="project" value="GO_Central"/>
</dbReference>
<dbReference type="GO" id="GO:0005764">
    <property type="term" value="C:lysosome"/>
    <property type="evidence" value="ECO:0000318"/>
    <property type="project" value="GO_Central"/>
</dbReference>
<dbReference type="GO" id="GO:0004197">
    <property type="term" value="F:cysteine-type endopeptidase activity"/>
    <property type="evidence" value="ECO:0000318"/>
    <property type="project" value="GO_Central"/>
</dbReference>
<dbReference type="GO" id="GO:0051603">
    <property type="term" value="P:proteolysis involved in protein catabolic process"/>
    <property type="evidence" value="ECO:0000318"/>
    <property type="project" value="GO_Central"/>
</dbReference>
<dbReference type="CDD" id="cd02248">
    <property type="entry name" value="Peptidase_C1A"/>
    <property type="match status" value="1"/>
</dbReference>
<dbReference type="FunFam" id="3.90.70.10:FF:000068">
    <property type="entry name" value="Cysteine protease 1"/>
    <property type="match status" value="1"/>
</dbReference>
<dbReference type="Gene3D" id="3.90.70.10">
    <property type="entry name" value="Cysteine proteinases"/>
    <property type="match status" value="1"/>
</dbReference>
<dbReference type="InterPro" id="IPR038765">
    <property type="entry name" value="Papain-like_cys_pep_sf"/>
</dbReference>
<dbReference type="InterPro" id="IPR025661">
    <property type="entry name" value="Pept_asp_AS"/>
</dbReference>
<dbReference type="InterPro" id="IPR000169">
    <property type="entry name" value="Pept_cys_AS"/>
</dbReference>
<dbReference type="InterPro" id="IPR025660">
    <property type="entry name" value="Pept_his_AS"/>
</dbReference>
<dbReference type="InterPro" id="IPR013128">
    <property type="entry name" value="Peptidase_C1A"/>
</dbReference>
<dbReference type="InterPro" id="IPR000668">
    <property type="entry name" value="Peptidase_C1A_C"/>
</dbReference>
<dbReference type="InterPro" id="IPR039417">
    <property type="entry name" value="Peptidase_C1A_papain-like"/>
</dbReference>
<dbReference type="InterPro" id="IPR013201">
    <property type="entry name" value="Prot_inhib_I29"/>
</dbReference>
<dbReference type="PANTHER" id="PTHR12411">
    <property type="entry name" value="CYSTEINE PROTEASE FAMILY C1-RELATED"/>
    <property type="match status" value="1"/>
</dbReference>
<dbReference type="Pfam" id="PF08246">
    <property type="entry name" value="Inhibitor_I29"/>
    <property type="match status" value="1"/>
</dbReference>
<dbReference type="Pfam" id="PF00112">
    <property type="entry name" value="Peptidase_C1"/>
    <property type="match status" value="1"/>
</dbReference>
<dbReference type="PRINTS" id="PR00705">
    <property type="entry name" value="PAPAIN"/>
</dbReference>
<dbReference type="SMART" id="SM00848">
    <property type="entry name" value="Inhibitor_I29"/>
    <property type="match status" value="1"/>
</dbReference>
<dbReference type="SMART" id="SM00645">
    <property type="entry name" value="Pept_C1"/>
    <property type="match status" value="1"/>
</dbReference>
<dbReference type="SUPFAM" id="SSF54001">
    <property type="entry name" value="Cysteine proteinases"/>
    <property type="match status" value="1"/>
</dbReference>
<dbReference type="PROSITE" id="PS00640">
    <property type="entry name" value="THIOL_PROTEASE_ASN"/>
    <property type="match status" value="1"/>
</dbReference>
<dbReference type="PROSITE" id="PS00139">
    <property type="entry name" value="THIOL_PROTEASE_CYS"/>
    <property type="match status" value="1"/>
</dbReference>
<dbReference type="PROSITE" id="PS00639">
    <property type="entry name" value="THIOL_PROTEASE_HIS"/>
    <property type="match status" value="1"/>
</dbReference>
<protein>
    <recommendedName>
        <fullName evidence="11">Germination-specific cysteine protease 1</fullName>
        <ecNumber evidence="3">3.4.22.-</ecNumber>
    </recommendedName>
    <alternativeName>
        <fullName evidence="12">RD21A-like protease 1</fullName>
    </alternativeName>
</protein>
<reference key="1">
    <citation type="submission" date="2001-07" db="EMBL/GenBank/DDBJ databases">
        <title>A germination-specific cysteine proteinase (GCP1) from Arabidopsis thaliana.</title>
        <authorList>
            <person name="Pritchard S.L."/>
            <person name="Graham I.A."/>
        </authorList>
    </citation>
    <scope>NUCLEOTIDE SEQUENCE [MRNA]</scope>
</reference>
<reference key="2">
    <citation type="journal article" date="1998" name="Nature">
        <title>Analysis of 1.9 Mb of contiguous sequence from chromosome 4 of Arabidopsis thaliana.</title>
        <authorList>
            <person name="Bevan M."/>
            <person name="Bancroft I."/>
            <person name="Bent E."/>
            <person name="Love K."/>
            <person name="Goodman H.M."/>
            <person name="Dean C."/>
            <person name="Bergkamp R."/>
            <person name="Dirkse W."/>
            <person name="van Staveren M."/>
            <person name="Stiekema W."/>
            <person name="Drost L."/>
            <person name="Ridley P."/>
            <person name="Hudson S.-A."/>
            <person name="Patel K."/>
            <person name="Murphy G."/>
            <person name="Piffanelli P."/>
            <person name="Wedler H."/>
            <person name="Wedler E."/>
            <person name="Wambutt R."/>
            <person name="Weitzenegger T."/>
            <person name="Pohl T."/>
            <person name="Terryn N."/>
            <person name="Gielen J."/>
            <person name="Villarroel R."/>
            <person name="De Clercq R."/>
            <person name="van Montagu M."/>
            <person name="Lecharny A."/>
            <person name="Aubourg S."/>
            <person name="Gy I."/>
            <person name="Kreis M."/>
            <person name="Lao N."/>
            <person name="Kavanagh T."/>
            <person name="Hempel S."/>
            <person name="Kotter P."/>
            <person name="Entian K.-D."/>
            <person name="Rieger M."/>
            <person name="Schaefer M."/>
            <person name="Funk B."/>
            <person name="Mueller-Auer S."/>
            <person name="Silvey M."/>
            <person name="James R."/>
            <person name="Monfort A."/>
            <person name="Pons A."/>
            <person name="Puigdomenech P."/>
            <person name="Douka A."/>
            <person name="Voukelatou E."/>
            <person name="Milioni D."/>
            <person name="Hatzopoulos P."/>
            <person name="Piravandi E."/>
            <person name="Obermaier B."/>
            <person name="Hilbert H."/>
            <person name="Duesterhoeft A."/>
            <person name="Moores T."/>
            <person name="Jones J.D.G."/>
            <person name="Eneva T."/>
            <person name="Palme K."/>
            <person name="Benes V."/>
            <person name="Rechmann S."/>
            <person name="Ansorge W."/>
            <person name="Cooke R."/>
            <person name="Berger C."/>
            <person name="Delseny M."/>
            <person name="Voet M."/>
            <person name="Volckaert G."/>
            <person name="Mewes H.-W."/>
            <person name="Klosterman S."/>
            <person name="Schueller C."/>
            <person name="Chalwatzis N."/>
        </authorList>
    </citation>
    <scope>NUCLEOTIDE SEQUENCE [LARGE SCALE GENOMIC DNA]</scope>
    <source>
        <strain>cv. Columbia</strain>
    </source>
</reference>
<reference key="3">
    <citation type="journal article" date="1999" name="Nature">
        <title>Sequence and analysis of chromosome 4 of the plant Arabidopsis thaliana.</title>
        <authorList>
            <person name="Mayer K.F.X."/>
            <person name="Schueller C."/>
            <person name="Wambutt R."/>
            <person name="Murphy G."/>
            <person name="Volckaert G."/>
            <person name="Pohl T."/>
            <person name="Duesterhoeft A."/>
            <person name="Stiekema W."/>
            <person name="Entian K.-D."/>
            <person name="Terryn N."/>
            <person name="Harris B."/>
            <person name="Ansorge W."/>
            <person name="Brandt P."/>
            <person name="Grivell L.A."/>
            <person name="Rieger M."/>
            <person name="Weichselgartner M."/>
            <person name="de Simone V."/>
            <person name="Obermaier B."/>
            <person name="Mache R."/>
            <person name="Mueller M."/>
            <person name="Kreis M."/>
            <person name="Delseny M."/>
            <person name="Puigdomenech P."/>
            <person name="Watson M."/>
            <person name="Schmidtheini T."/>
            <person name="Reichert B."/>
            <person name="Portetelle D."/>
            <person name="Perez-Alonso M."/>
            <person name="Boutry M."/>
            <person name="Bancroft I."/>
            <person name="Vos P."/>
            <person name="Hoheisel J."/>
            <person name="Zimmermann W."/>
            <person name="Wedler H."/>
            <person name="Ridley P."/>
            <person name="Langham S.-A."/>
            <person name="McCullagh B."/>
            <person name="Bilham L."/>
            <person name="Robben J."/>
            <person name="van der Schueren J."/>
            <person name="Grymonprez B."/>
            <person name="Chuang Y.-J."/>
            <person name="Vandenbussche F."/>
            <person name="Braeken M."/>
            <person name="Weltjens I."/>
            <person name="Voet M."/>
            <person name="Bastiaens I."/>
            <person name="Aert R."/>
            <person name="Defoor E."/>
            <person name="Weitzenegger T."/>
            <person name="Bothe G."/>
            <person name="Ramsperger U."/>
            <person name="Hilbert H."/>
            <person name="Braun M."/>
            <person name="Holzer E."/>
            <person name="Brandt A."/>
            <person name="Peters S."/>
            <person name="van Staveren M."/>
            <person name="Dirkse W."/>
            <person name="Mooijman P."/>
            <person name="Klein Lankhorst R."/>
            <person name="Rose M."/>
            <person name="Hauf J."/>
            <person name="Koetter P."/>
            <person name="Berneiser S."/>
            <person name="Hempel S."/>
            <person name="Feldpausch M."/>
            <person name="Lamberth S."/>
            <person name="Van den Daele H."/>
            <person name="De Keyser A."/>
            <person name="Buysshaert C."/>
            <person name="Gielen J."/>
            <person name="Villarroel R."/>
            <person name="De Clercq R."/>
            <person name="van Montagu M."/>
            <person name="Rogers J."/>
            <person name="Cronin A."/>
            <person name="Quail M.A."/>
            <person name="Bray-Allen S."/>
            <person name="Clark L."/>
            <person name="Doggett J."/>
            <person name="Hall S."/>
            <person name="Kay M."/>
            <person name="Lennard N."/>
            <person name="McLay K."/>
            <person name="Mayes R."/>
            <person name="Pettett A."/>
            <person name="Rajandream M.A."/>
            <person name="Lyne M."/>
            <person name="Benes V."/>
            <person name="Rechmann S."/>
            <person name="Borkova D."/>
            <person name="Bloecker H."/>
            <person name="Scharfe M."/>
            <person name="Grimm M."/>
            <person name="Loehnert T.-H."/>
            <person name="Dose S."/>
            <person name="de Haan M."/>
            <person name="Maarse A.C."/>
            <person name="Schaefer M."/>
            <person name="Mueller-Auer S."/>
            <person name="Gabel C."/>
            <person name="Fuchs M."/>
            <person name="Fartmann B."/>
            <person name="Granderath K."/>
            <person name="Dauner D."/>
            <person name="Herzl A."/>
            <person name="Neumann S."/>
            <person name="Argiriou A."/>
            <person name="Vitale D."/>
            <person name="Liguori R."/>
            <person name="Piravandi E."/>
            <person name="Massenet O."/>
            <person name="Quigley F."/>
            <person name="Clabauld G."/>
            <person name="Muendlein A."/>
            <person name="Felber R."/>
            <person name="Schnabl S."/>
            <person name="Hiller R."/>
            <person name="Schmidt W."/>
            <person name="Lecharny A."/>
            <person name="Aubourg S."/>
            <person name="Chefdor F."/>
            <person name="Cooke R."/>
            <person name="Berger C."/>
            <person name="Monfort A."/>
            <person name="Casacuberta E."/>
            <person name="Gibbons T."/>
            <person name="Weber N."/>
            <person name="Vandenbol M."/>
            <person name="Bargues M."/>
            <person name="Terol J."/>
            <person name="Torres A."/>
            <person name="Perez-Perez A."/>
            <person name="Purnelle B."/>
            <person name="Bent E."/>
            <person name="Johnson S."/>
            <person name="Tacon D."/>
            <person name="Jesse T."/>
            <person name="Heijnen L."/>
            <person name="Schwarz S."/>
            <person name="Scholler P."/>
            <person name="Heber S."/>
            <person name="Francs P."/>
            <person name="Bielke C."/>
            <person name="Frishman D."/>
            <person name="Haase D."/>
            <person name="Lemcke K."/>
            <person name="Mewes H.-W."/>
            <person name="Stocker S."/>
            <person name="Zaccaria P."/>
            <person name="Bevan M."/>
            <person name="Wilson R.K."/>
            <person name="de la Bastide M."/>
            <person name="Habermann K."/>
            <person name="Parnell L."/>
            <person name="Dedhia N."/>
            <person name="Gnoj L."/>
            <person name="Schutz K."/>
            <person name="Huang E."/>
            <person name="Spiegel L."/>
            <person name="Sekhon M."/>
            <person name="Murray J."/>
            <person name="Sheet P."/>
            <person name="Cordes M."/>
            <person name="Abu-Threideh J."/>
            <person name="Stoneking T."/>
            <person name="Kalicki J."/>
            <person name="Graves T."/>
            <person name="Harmon G."/>
            <person name="Edwards J."/>
            <person name="Latreille P."/>
            <person name="Courtney L."/>
            <person name="Cloud J."/>
            <person name="Abbott A."/>
            <person name="Scott K."/>
            <person name="Johnson D."/>
            <person name="Minx P."/>
            <person name="Bentley D."/>
            <person name="Fulton B."/>
            <person name="Miller N."/>
            <person name="Greco T."/>
            <person name="Kemp K."/>
            <person name="Kramer J."/>
            <person name="Fulton L."/>
            <person name="Mardis E."/>
            <person name="Dante M."/>
            <person name="Pepin K."/>
            <person name="Hillier L.W."/>
            <person name="Nelson J."/>
            <person name="Spieth J."/>
            <person name="Ryan E."/>
            <person name="Andrews S."/>
            <person name="Geisel C."/>
            <person name="Layman D."/>
            <person name="Du H."/>
            <person name="Ali J."/>
            <person name="Berghoff A."/>
            <person name="Jones K."/>
            <person name="Drone K."/>
            <person name="Cotton M."/>
            <person name="Joshu C."/>
            <person name="Antonoiu B."/>
            <person name="Zidanic M."/>
            <person name="Strong C."/>
            <person name="Sun H."/>
            <person name="Lamar B."/>
            <person name="Yordan C."/>
            <person name="Ma P."/>
            <person name="Zhong J."/>
            <person name="Preston R."/>
            <person name="Vil D."/>
            <person name="Shekher M."/>
            <person name="Matero A."/>
            <person name="Shah R."/>
            <person name="Swaby I.K."/>
            <person name="O'Shaughnessy A."/>
            <person name="Rodriguez M."/>
            <person name="Hoffman J."/>
            <person name="Till S."/>
            <person name="Granat S."/>
            <person name="Shohdy N."/>
            <person name="Hasegawa A."/>
            <person name="Hameed A."/>
            <person name="Lodhi M."/>
            <person name="Johnson A."/>
            <person name="Chen E."/>
            <person name="Marra M.A."/>
            <person name="Martienssen R."/>
            <person name="McCombie W.R."/>
        </authorList>
    </citation>
    <scope>NUCLEOTIDE SEQUENCE [LARGE SCALE GENOMIC DNA]</scope>
    <source>
        <strain>cv. Columbia</strain>
    </source>
</reference>
<reference key="4">
    <citation type="journal article" date="2017" name="Plant J.">
        <title>Araport11: a complete reannotation of the Arabidopsis thaliana reference genome.</title>
        <authorList>
            <person name="Cheng C.Y."/>
            <person name="Krishnakumar V."/>
            <person name="Chan A.P."/>
            <person name="Thibaud-Nissen F."/>
            <person name="Schobel S."/>
            <person name="Town C.D."/>
        </authorList>
    </citation>
    <scope>GENOME REANNOTATION</scope>
    <scope>SEQUENCE REVISION</scope>
    <source>
        <strain>cv. Columbia</strain>
    </source>
</reference>
<reference key="5">
    <citation type="submission" date="2006-07" db="EMBL/GenBank/DDBJ databases">
        <title>Large-scale analysis of RIKEN Arabidopsis full-length (RAFL) cDNAs.</title>
        <authorList>
            <person name="Totoki Y."/>
            <person name="Seki M."/>
            <person name="Ishida J."/>
            <person name="Nakajima M."/>
            <person name="Enju A."/>
            <person name="Kamiya A."/>
            <person name="Narusaka M."/>
            <person name="Shin-i T."/>
            <person name="Nakagawa M."/>
            <person name="Sakamoto N."/>
            <person name="Oishi K."/>
            <person name="Kohara Y."/>
            <person name="Kobayashi M."/>
            <person name="Toyoda A."/>
            <person name="Sakaki Y."/>
            <person name="Sakurai T."/>
            <person name="Iida K."/>
            <person name="Akiyama K."/>
            <person name="Satou M."/>
            <person name="Toyoda T."/>
            <person name="Konagaya A."/>
            <person name="Carninci P."/>
            <person name="Kawai J."/>
            <person name="Hayashizaki Y."/>
            <person name="Shinozaki K."/>
        </authorList>
    </citation>
    <scope>NUCLEOTIDE SEQUENCE [LARGE SCALE MRNA]</scope>
    <source>
        <strain>cv. Columbia</strain>
    </source>
</reference>
<reference key="6">
    <citation type="journal article" date="2007" name="Plant Cell">
        <title>Seed germination of GA-insensitive sleepy1 mutants does not require RGL2 protein disappearance in Arabidopsis.</title>
        <authorList>
            <person name="Ariizumi T."/>
            <person name="Steber C.M."/>
        </authorList>
    </citation>
    <scope>INDUCTION BY GIBBERELLIN</scope>
</reference>
<organism>
    <name type="scientific">Arabidopsis thaliana</name>
    <name type="common">Mouse-ear cress</name>
    <dbReference type="NCBI Taxonomy" id="3702"/>
    <lineage>
        <taxon>Eukaryota</taxon>
        <taxon>Viridiplantae</taxon>
        <taxon>Streptophyta</taxon>
        <taxon>Embryophyta</taxon>
        <taxon>Tracheophyta</taxon>
        <taxon>Spermatophyta</taxon>
        <taxon>Magnoliopsida</taxon>
        <taxon>eudicotyledons</taxon>
        <taxon>Gunneridae</taxon>
        <taxon>Pentapetalae</taxon>
        <taxon>rosids</taxon>
        <taxon>malvids</taxon>
        <taxon>Brassicales</taxon>
        <taxon>Brassicaceae</taxon>
        <taxon>Camelineae</taxon>
        <taxon>Arabidopsis</taxon>
    </lineage>
</organism>
<gene>
    <name evidence="11" type="primary">GCP1</name>
    <name evidence="12" type="synonym">RDL1</name>
    <name evidence="14" type="ordered locus">At4g36880</name>
    <name evidence="15" type="ORF">C7A10.480</name>
</gene>
<accession>Q94B08</accession>
<accession>O23195</accession>
<accession>Q0WPN3</accession>